<dbReference type="EMBL" id="AE010299">
    <property type="protein sequence ID" value="AAM06492.1"/>
    <property type="molecule type" value="Genomic_DNA"/>
</dbReference>
<dbReference type="STRING" id="188937.MA_3119"/>
<dbReference type="EnsemblBacteria" id="AAM06492">
    <property type="protein sequence ID" value="AAM06492"/>
    <property type="gene ID" value="MA_3119"/>
</dbReference>
<dbReference type="KEGG" id="mac:MA_3119"/>
<dbReference type="HOGENOM" id="CLU_106567_0_0_2"/>
<dbReference type="InParanoid" id="Q8TLB8"/>
<dbReference type="OrthoDB" id="135876at2157"/>
<dbReference type="PhylomeDB" id="Q8TLB8"/>
<dbReference type="Proteomes" id="UP000002487">
    <property type="component" value="Chromosome"/>
</dbReference>
<dbReference type="InterPro" id="IPR009306">
    <property type="entry name" value="DUF963"/>
</dbReference>
<dbReference type="InterPro" id="IPR008887">
    <property type="entry name" value="UPF0228"/>
</dbReference>
<dbReference type="Pfam" id="PF06131">
    <property type="entry name" value="DUF963"/>
    <property type="match status" value="1"/>
</dbReference>
<dbReference type="Pfam" id="PF05727">
    <property type="entry name" value="UPF0228"/>
    <property type="match status" value="1"/>
</dbReference>
<reference key="1">
    <citation type="journal article" date="2002" name="Genome Res.">
        <title>The genome of Methanosarcina acetivorans reveals extensive metabolic and physiological diversity.</title>
        <authorList>
            <person name="Galagan J.E."/>
            <person name="Nusbaum C."/>
            <person name="Roy A."/>
            <person name="Endrizzi M.G."/>
            <person name="Macdonald P."/>
            <person name="FitzHugh W."/>
            <person name="Calvo S."/>
            <person name="Engels R."/>
            <person name="Smirnov S."/>
            <person name="Atnoor D."/>
            <person name="Brown A."/>
            <person name="Allen N."/>
            <person name="Naylor J."/>
            <person name="Stange-Thomann N."/>
            <person name="DeArellano K."/>
            <person name="Johnson R."/>
            <person name="Linton L."/>
            <person name="McEwan P."/>
            <person name="McKernan K."/>
            <person name="Talamas J."/>
            <person name="Tirrell A."/>
            <person name="Ye W."/>
            <person name="Zimmer A."/>
            <person name="Barber R.D."/>
            <person name="Cann I."/>
            <person name="Graham D.E."/>
            <person name="Grahame D.A."/>
            <person name="Guss A.M."/>
            <person name="Hedderich R."/>
            <person name="Ingram-Smith C."/>
            <person name="Kuettner H.C."/>
            <person name="Krzycki J.A."/>
            <person name="Leigh J.A."/>
            <person name="Li W."/>
            <person name="Liu J."/>
            <person name="Mukhopadhyay B."/>
            <person name="Reeve J.N."/>
            <person name="Smith K."/>
            <person name="Springer T.A."/>
            <person name="Umayam L.A."/>
            <person name="White O."/>
            <person name="White R.H."/>
            <person name="de Macario E.C."/>
            <person name="Ferry J.G."/>
            <person name="Jarrell K.F."/>
            <person name="Jing H."/>
            <person name="Macario A.J.L."/>
            <person name="Paulsen I.T."/>
            <person name="Pritchett M."/>
            <person name="Sowers K.R."/>
            <person name="Swanson R.V."/>
            <person name="Zinder S.H."/>
            <person name="Lander E."/>
            <person name="Metcalf W.W."/>
            <person name="Birren B."/>
        </authorList>
    </citation>
    <scope>NUCLEOTIDE SEQUENCE [LARGE SCALE GENOMIC DNA]</scope>
    <source>
        <strain>ATCC 35395 / DSM 2834 / JCM 12185 / C2A</strain>
    </source>
</reference>
<organism>
    <name type="scientific">Methanosarcina acetivorans (strain ATCC 35395 / DSM 2834 / JCM 12185 / C2A)</name>
    <dbReference type="NCBI Taxonomy" id="188937"/>
    <lineage>
        <taxon>Archaea</taxon>
        <taxon>Methanobacteriati</taxon>
        <taxon>Methanobacteriota</taxon>
        <taxon>Stenosarchaea group</taxon>
        <taxon>Methanomicrobia</taxon>
        <taxon>Methanosarcinales</taxon>
        <taxon>Methanosarcinaceae</taxon>
        <taxon>Methanosarcina</taxon>
    </lineage>
</organism>
<name>Y3119_METAC</name>
<evidence type="ECO:0000256" key="1">
    <source>
        <dbReference type="SAM" id="MobiDB-lite"/>
    </source>
</evidence>
<evidence type="ECO:0000305" key="2"/>
<keyword id="KW-1185">Reference proteome</keyword>
<gene>
    <name type="ordered locus">MA_3119</name>
</gene>
<protein>
    <recommendedName>
        <fullName>UPF0228 protein MA_3119</fullName>
    </recommendedName>
</protein>
<proteinExistence type="inferred from homology"/>
<feature type="chain" id="PRO_0000220398" description="UPF0228 protein MA_3119">
    <location>
        <begin position="1"/>
        <end position="229"/>
    </location>
</feature>
<feature type="region of interest" description="Disordered" evidence="1">
    <location>
        <begin position="35"/>
        <end position="67"/>
    </location>
</feature>
<feature type="compositionally biased region" description="Low complexity" evidence="1">
    <location>
        <begin position="35"/>
        <end position="66"/>
    </location>
</feature>
<sequence>MVEMSNVRKEIVAFIVLLSLLLLWTLFTQAPINTSTPVNTSTPVNTSTPVNTSTPVNTSTPVSTSTIDPESQVAGMAIQFKNGTSESEVKSTLQNYNMTQNYRITFDANHYPEYYIMVNKENITDVKGKLEKEKTWTEPIPAIEKGNYYIITISERVIHNKNFIMMLSKYNLQLEKFVWCDIRFLYSDGPLTYWISKEDAIRLKNELEQNENIFTIRFDYLYPPYDPTT</sequence>
<accession>Q8TLB8</accession>
<comment type="similarity">
    <text evidence="2">Belongs to the UPF0228 family.</text>
</comment>